<gene>
    <name evidence="7" type="primary">Tnks2</name>
    <name type="synonym">Tank2</name>
</gene>
<dbReference type="EC" id="2.4.2.30" evidence="3"/>
<dbReference type="EC" id="2.4.2.-" evidence="3"/>
<dbReference type="EMBL" id="AK047094">
    <property type="protein sequence ID" value="BAC32960.2"/>
    <property type="molecule type" value="mRNA"/>
</dbReference>
<dbReference type="EMBL" id="AK149368">
    <property type="protein sequence ID" value="BAE28838.1"/>
    <property type="molecule type" value="mRNA"/>
</dbReference>
<dbReference type="EMBL" id="AC116128">
    <property type="status" value="NOT_ANNOTATED_CDS"/>
    <property type="molecule type" value="Genomic_DNA"/>
</dbReference>
<dbReference type="EMBL" id="BC063101">
    <property type="protein sequence ID" value="AAH63101.1"/>
    <property type="molecule type" value="mRNA"/>
</dbReference>
<dbReference type="CCDS" id="CCDS50426.1"/>
<dbReference type="RefSeq" id="NP_001157107.1">
    <property type="nucleotide sequence ID" value="NM_001163635.1"/>
</dbReference>
<dbReference type="SMR" id="Q3UES3"/>
<dbReference type="BioGRID" id="216798">
    <property type="interactions" value="19"/>
</dbReference>
<dbReference type="CORUM" id="Q3UES3"/>
<dbReference type="FunCoup" id="Q3UES3">
    <property type="interactions" value="4405"/>
</dbReference>
<dbReference type="IntAct" id="Q3UES3">
    <property type="interactions" value="19"/>
</dbReference>
<dbReference type="STRING" id="10090.ENSMUSP00000025729"/>
<dbReference type="BindingDB" id="Q3UES3"/>
<dbReference type="ChEMBL" id="CHEMBL3232703"/>
<dbReference type="iPTMnet" id="Q3UES3"/>
<dbReference type="PhosphoSitePlus" id="Q3UES3"/>
<dbReference type="SwissPalm" id="Q3UES3"/>
<dbReference type="PaxDb" id="10090-ENSMUSP00000025729"/>
<dbReference type="ProteomicsDB" id="258938"/>
<dbReference type="Antibodypedia" id="30362">
    <property type="antibodies" value="215 antibodies from 29 providers"/>
</dbReference>
<dbReference type="Ensembl" id="ENSMUST00000025729.12">
    <property type="protein sequence ID" value="ENSMUSP00000025729.6"/>
    <property type="gene ID" value="ENSMUSG00000024811.13"/>
</dbReference>
<dbReference type="GeneID" id="74493"/>
<dbReference type="KEGG" id="mmu:74493"/>
<dbReference type="UCSC" id="uc008hhu.2">
    <property type="organism name" value="mouse"/>
</dbReference>
<dbReference type="AGR" id="MGI:1921743"/>
<dbReference type="CTD" id="80351"/>
<dbReference type="MGI" id="MGI:1921743">
    <property type="gene designation" value="Tnks2"/>
</dbReference>
<dbReference type="VEuPathDB" id="HostDB:ENSMUSG00000024811"/>
<dbReference type="eggNOG" id="KOG4177">
    <property type="taxonomic scope" value="Eukaryota"/>
</dbReference>
<dbReference type="GeneTree" id="ENSGT00940000159911"/>
<dbReference type="HOGENOM" id="CLU_004303_0_0_1"/>
<dbReference type="InParanoid" id="Q3UES3"/>
<dbReference type="OMA" id="CKLLLQX"/>
<dbReference type="OrthoDB" id="4772757at2759"/>
<dbReference type="PhylomeDB" id="Q3UES3"/>
<dbReference type="TreeFam" id="TF326036"/>
<dbReference type="Reactome" id="R-MMU-201681">
    <property type="pathway name" value="TCF dependent signaling in response to WNT"/>
</dbReference>
<dbReference type="Reactome" id="R-MMU-4641257">
    <property type="pathway name" value="Degradation of AXIN"/>
</dbReference>
<dbReference type="Reactome" id="R-MMU-5689880">
    <property type="pathway name" value="Ub-specific processing proteases"/>
</dbReference>
<dbReference type="Reactome" id="R-MMU-8948751">
    <property type="pathway name" value="Regulation of PTEN stability and activity"/>
</dbReference>
<dbReference type="BioGRID-ORCS" id="74493">
    <property type="hits" value="0 hits in 76 CRISPR screens"/>
</dbReference>
<dbReference type="ChiTaRS" id="Tnks2">
    <property type="organism name" value="mouse"/>
</dbReference>
<dbReference type="PRO" id="PR:Q3UES3"/>
<dbReference type="Proteomes" id="UP000000589">
    <property type="component" value="Chromosome 19"/>
</dbReference>
<dbReference type="RNAct" id="Q3UES3">
    <property type="molecule type" value="protein"/>
</dbReference>
<dbReference type="Bgee" id="ENSMUSG00000024811">
    <property type="expression patterns" value="Expressed in primitive streak and 259 other cell types or tissues"/>
</dbReference>
<dbReference type="ExpressionAtlas" id="Q3UES3">
    <property type="expression patterns" value="baseline and differential"/>
</dbReference>
<dbReference type="GO" id="GO:0000781">
    <property type="term" value="C:chromosome, telomeric region"/>
    <property type="evidence" value="ECO:0007669"/>
    <property type="project" value="UniProtKB-SubCell"/>
</dbReference>
<dbReference type="GO" id="GO:0000139">
    <property type="term" value="C:Golgi membrane"/>
    <property type="evidence" value="ECO:0007669"/>
    <property type="project" value="UniProtKB-SubCell"/>
</dbReference>
<dbReference type="GO" id="GO:0005634">
    <property type="term" value="C:nucleus"/>
    <property type="evidence" value="ECO:0007669"/>
    <property type="project" value="UniProtKB-SubCell"/>
</dbReference>
<dbReference type="GO" id="GO:0046872">
    <property type="term" value="F:metal ion binding"/>
    <property type="evidence" value="ECO:0007669"/>
    <property type="project" value="UniProtKB-KW"/>
</dbReference>
<dbReference type="GO" id="GO:0003950">
    <property type="term" value="F:NAD+ poly-ADP-ribosyltransferase activity"/>
    <property type="evidence" value="ECO:0000250"/>
    <property type="project" value="UniProtKB"/>
</dbReference>
<dbReference type="GO" id="GO:1990404">
    <property type="term" value="F:NAD+-protein mono-ADP-ribosyltransferase activity"/>
    <property type="evidence" value="ECO:0000250"/>
    <property type="project" value="UniProtKB"/>
</dbReference>
<dbReference type="GO" id="GO:0140806">
    <property type="term" value="F:NAD+-protein-aspartate ADP-ribosyltransferase activity"/>
    <property type="evidence" value="ECO:0007669"/>
    <property type="project" value="RHEA"/>
</dbReference>
<dbReference type="GO" id="GO:0140807">
    <property type="term" value="F:NAD+-protein-glutamate ADP-ribosyltransferase activity"/>
    <property type="evidence" value="ECO:0007669"/>
    <property type="project" value="RHEA"/>
</dbReference>
<dbReference type="GO" id="GO:0016779">
    <property type="term" value="F:nucleotidyltransferase activity"/>
    <property type="evidence" value="ECO:0007669"/>
    <property type="project" value="UniProtKB-KW"/>
</dbReference>
<dbReference type="GO" id="GO:0035264">
    <property type="term" value="P:multicellular organism growth"/>
    <property type="evidence" value="ECO:0000315"/>
    <property type="project" value="MGI"/>
</dbReference>
<dbReference type="GO" id="GO:0090263">
    <property type="term" value="P:positive regulation of canonical Wnt signaling pathway"/>
    <property type="evidence" value="ECO:0000250"/>
    <property type="project" value="UniProtKB"/>
</dbReference>
<dbReference type="GO" id="GO:0070212">
    <property type="term" value="P:protein poly-ADP-ribosylation"/>
    <property type="evidence" value="ECO:0000250"/>
    <property type="project" value="UniProtKB"/>
</dbReference>
<dbReference type="GO" id="GO:0000209">
    <property type="term" value="P:protein polyubiquitination"/>
    <property type="evidence" value="ECO:0000250"/>
    <property type="project" value="UniProtKB"/>
</dbReference>
<dbReference type="GO" id="GO:0040014">
    <property type="term" value="P:regulation of multicellular organism growth"/>
    <property type="evidence" value="ECO:0000315"/>
    <property type="project" value="MGI"/>
</dbReference>
<dbReference type="GO" id="GO:0000723">
    <property type="term" value="P:telomere maintenance"/>
    <property type="evidence" value="ECO:0000250"/>
    <property type="project" value="MGI"/>
</dbReference>
<dbReference type="GO" id="GO:0016055">
    <property type="term" value="P:Wnt signaling pathway"/>
    <property type="evidence" value="ECO:0007669"/>
    <property type="project" value="UniProtKB-KW"/>
</dbReference>
<dbReference type="CDD" id="cd09524">
    <property type="entry name" value="SAM_tankyrase1_2"/>
    <property type="match status" value="1"/>
</dbReference>
<dbReference type="CDD" id="cd01438">
    <property type="entry name" value="tankyrase_like"/>
    <property type="match status" value="1"/>
</dbReference>
<dbReference type="FunFam" id="1.10.150.50:FF:000012">
    <property type="entry name" value="Poly [ADP-ribose] polymerase"/>
    <property type="match status" value="1"/>
</dbReference>
<dbReference type="FunFam" id="1.25.40.20:FF:000009">
    <property type="entry name" value="Poly [ADP-ribose] polymerase"/>
    <property type="match status" value="1"/>
</dbReference>
<dbReference type="FunFam" id="1.25.40.20:FF:000010">
    <property type="entry name" value="Poly [ADP-ribose] polymerase"/>
    <property type="match status" value="1"/>
</dbReference>
<dbReference type="FunFam" id="1.25.40.20:FF:000011">
    <property type="entry name" value="Poly [ADP-ribose] polymerase"/>
    <property type="match status" value="1"/>
</dbReference>
<dbReference type="FunFam" id="1.25.40.20:FF:000021">
    <property type="entry name" value="Poly [ADP-ribose] polymerase"/>
    <property type="match status" value="1"/>
</dbReference>
<dbReference type="FunFam" id="1.25.40.20:FF:000024">
    <property type="entry name" value="Poly [ADP-ribose] polymerase"/>
    <property type="match status" value="1"/>
</dbReference>
<dbReference type="FunFam" id="3.90.228.10:FF:000001">
    <property type="entry name" value="Poly [ADP-ribose] polymerase tankyrase-2"/>
    <property type="match status" value="1"/>
</dbReference>
<dbReference type="Gene3D" id="3.90.228.10">
    <property type="match status" value="1"/>
</dbReference>
<dbReference type="Gene3D" id="6.20.320.10">
    <property type="match status" value="1"/>
</dbReference>
<dbReference type="Gene3D" id="1.25.40.20">
    <property type="entry name" value="Ankyrin repeat-containing domain"/>
    <property type="match status" value="5"/>
</dbReference>
<dbReference type="Gene3D" id="1.10.150.50">
    <property type="entry name" value="Transcription Factor, Ets-1"/>
    <property type="match status" value="1"/>
</dbReference>
<dbReference type="InterPro" id="IPR002110">
    <property type="entry name" value="Ankyrin_rpt"/>
</dbReference>
<dbReference type="InterPro" id="IPR036770">
    <property type="entry name" value="Ankyrin_rpt-contain_sf"/>
</dbReference>
<dbReference type="InterPro" id="IPR012317">
    <property type="entry name" value="Poly(ADP-ribose)pol_cat_dom"/>
</dbReference>
<dbReference type="InterPro" id="IPR001660">
    <property type="entry name" value="SAM"/>
</dbReference>
<dbReference type="InterPro" id="IPR013761">
    <property type="entry name" value="SAM/pointed_sf"/>
</dbReference>
<dbReference type="PANTHER" id="PTHR24171:SF9">
    <property type="entry name" value="ANKYRIN REPEAT DOMAIN-CONTAINING PROTEIN 39"/>
    <property type="match status" value="1"/>
</dbReference>
<dbReference type="PANTHER" id="PTHR24171">
    <property type="entry name" value="ANKYRIN REPEAT DOMAIN-CONTAINING PROTEIN 39-RELATED"/>
    <property type="match status" value="1"/>
</dbReference>
<dbReference type="Pfam" id="PF00023">
    <property type="entry name" value="Ank"/>
    <property type="match status" value="3"/>
</dbReference>
<dbReference type="Pfam" id="PF12796">
    <property type="entry name" value="Ank_2"/>
    <property type="match status" value="6"/>
</dbReference>
<dbReference type="Pfam" id="PF00644">
    <property type="entry name" value="PARP"/>
    <property type="match status" value="1"/>
</dbReference>
<dbReference type="Pfam" id="PF07647">
    <property type="entry name" value="SAM_2"/>
    <property type="match status" value="1"/>
</dbReference>
<dbReference type="PRINTS" id="PR01415">
    <property type="entry name" value="ANKYRIN"/>
</dbReference>
<dbReference type="SMART" id="SM00248">
    <property type="entry name" value="ANK"/>
    <property type="match status" value="15"/>
</dbReference>
<dbReference type="SMART" id="SM00454">
    <property type="entry name" value="SAM"/>
    <property type="match status" value="1"/>
</dbReference>
<dbReference type="SUPFAM" id="SSF56399">
    <property type="entry name" value="ADP-ribosylation"/>
    <property type="match status" value="1"/>
</dbReference>
<dbReference type="SUPFAM" id="SSF48403">
    <property type="entry name" value="Ankyrin repeat"/>
    <property type="match status" value="3"/>
</dbReference>
<dbReference type="SUPFAM" id="SSF47769">
    <property type="entry name" value="SAM/Pointed domain"/>
    <property type="match status" value="1"/>
</dbReference>
<dbReference type="PROSITE" id="PS50297">
    <property type="entry name" value="ANK_REP_REGION"/>
    <property type="match status" value="1"/>
</dbReference>
<dbReference type="PROSITE" id="PS50088">
    <property type="entry name" value="ANK_REPEAT"/>
    <property type="match status" value="15"/>
</dbReference>
<dbReference type="PROSITE" id="PS51059">
    <property type="entry name" value="PARP_CATALYTIC"/>
    <property type="match status" value="1"/>
</dbReference>
<dbReference type="PROSITE" id="PS50105">
    <property type="entry name" value="SAM_DOMAIN"/>
    <property type="match status" value="1"/>
</dbReference>
<name>TNKS2_MOUSE</name>
<evidence type="ECO:0000250" key="1"/>
<evidence type="ECO:0000250" key="2">
    <source>
        <dbReference type="UniProtKB" id="O95271"/>
    </source>
</evidence>
<evidence type="ECO:0000250" key="3">
    <source>
        <dbReference type="UniProtKB" id="Q9H2K2"/>
    </source>
</evidence>
<evidence type="ECO:0000255" key="4">
    <source>
        <dbReference type="PROSITE-ProRule" id="PRU00184"/>
    </source>
</evidence>
<evidence type="ECO:0000255" key="5">
    <source>
        <dbReference type="PROSITE-ProRule" id="PRU00397"/>
    </source>
</evidence>
<evidence type="ECO:0000305" key="6"/>
<evidence type="ECO:0000312" key="7">
    <source>
        <dbReference type="MGI" id="MGI:1921743"/>
    </source>
</evidence>
<keyword id="KW-0013">ADP-ribosylation</keyword>
<keyword id="KW-0040">ANK repeat</keyword>
<keyword id="KW-0158">Chromosome</keyword>
<keyword id="KW-0963">Cytoplasm</keyword>
<keyword id="KW-0328">Glycosyltransferase</keyword>
<keyword id="KW-0333">Golgi apparatus</keyword>
<keyword id="KW-0379">Hydroxylation</keyword>
<keyword id="KW-0472">Membrane</keyword>
<keyword id="KW-0479">Metal-binding</keyword>
<keyword id="KW-0520">NAD</keyword>
<keyword id="KW-0548">Nucleotidyltransferase</keyword>
<keyword id="KW-0539">Nucleus</keyword>
<keyword id="KW-1185">Reference proteome</keyword>
<keyword id="KW-0677">Repeat</keyword>
<keyword id="KW-0779">Telomere</keyword>
<keyword id="KW-0808">Transferase</keyword>
<keyword id="KW-0832">Ubl conjugation</keyword>
<keyword id="KW-0879">Wnt signaling pathway</keyword>
<keyword id="KW-0862">Zinc</keyword>
<comment type="function">
    <text evidence="3">Poly-ADP-ribosyltransferase involved in various processes such as Wnt signaling pathway, telomere length and vesicle trafficking. Acts as an activator of the Wnt signaling pathway by mediating poly-ADP-ribosylation of AXIN1 and AXIN2, 2 key components of the beta-catenin destruction complex: poly-ADP-ribosylated target proteins are recognized by RNF146, which mediates their ubiquitination and subsequent degradation. Also mediates poly-ADP-ribosylation of BLZF1 and CASC3, followed by recruitment of RNF146 and subsequent ubiquitination. Mediates poly-ADP-ribosylation of TERF1, thereby contributing to the regulation of telomere length. Stimulates 26S proteasome activity.</text>
</comment>
<comment type="catalytic activity">
    <reaction evidence="3">
        <text>NAD(+) + (ADP-D-ribosyl)n-acceptor = nicotinamide + (ADP-D-ribosyl)n+1-acceptor + H(+).</text>
        <dbReference type="EC" id="2.4.2.30"/>
    </reaction>
</comment>
<comment type="catalytic activity">
    <reaction evidence="6">
        <text>L-aspartyl-[protein] + NAD(+) = 4-O-(ADP-D-ribosyl)-L-aspartyl-[protein] + nicotinamide</text>
        <dbReference type="Rhea" id="RHEA:54424"/>
        <dbReference type="Rhea" id="RHEA-COMP:9867"/>
        <dbReference type="Rhea" id="RHEA-COMP:13832"/>
        <dbReference type="ChEBI" id="CHEBI:17154"/>
        <dbReference type="ChEBI" id="CHEBI:29961"/>
        <dbReference type="ChEBI" id="CHEBI:57540"/>
        <dbReference type="ChEBI" id="CHEBI:138102"/>
    </reaction>
    <physiologicalReaction direction="left-to-right" evidence="6">
        <dbReference type="Rhea" id="RHEA:54425"/>
    </physiologicalReaction>
</comment>
<comment type="catalytic activity">
    <reaction evidence="6">
        <text>L-glutamyl-[protein] + NAD(+) = 5-O-(ADP-D-ribosyl)-L-glutamyl-[protein] + nicotinamide</text>
        <dbReference type="Rhea" id="RHEA:58224"/>
        <dbReference type="Rhea" id="RHEA-COMP:10208"/>
        <dbReference type="Rhea" id="RHEA-COMP:15089"/>
        <dbReference type="ChEBI" id="CHEBI:17154"/>
        <dbReference type="ChEBI" id="CHEBI:29973"/>
        <dbReference type="ChEBI" id="CHEBI:57540"/>
        <dbReference type="ChEBI" id="CHEBI:142540"/>
    </reaction>
    <physiologicalReaction direction="left-to-right" evidence="6">
        <dbReference type="Rhea" id="RHEA:58225"/>
    </physiologicalReaction>
</comment>
<comment type="subunit">
    <text evidence="3">Oligomerizes and associates with TNKS. Interacts with the cytoplasmic domain of LNPEP/Otase in SLC2A4/GLUT4-vesicles. Binds to the N-terminus of Grb14 and TRF1 with its ankyrin repeat region. Interacts with HIF1AN. Interacts with RNF146; this interaction leads to ubiquitination and proteasomal degradation. Interacts with NUMA1 (By similarity).</text>
</comment>
<comment type="subcellular location">
    <subcellularLocation>
        <location evidence="3">Cytoplasm</location>
    </subcellularLocation>
    <subcellularLocation>
        <location evidence="3">Golgi apparatus membrane</location>
        <topology evidence="3">Peripheral membrane protein</topology>
    </subcellularLocation>
    <subcellularLocation>
        <location evidence="3">Nucleus</location>
    </subcellularLocation>
    <subcellularLocation>
        <location evidence="3">Chromosome</location>
        <location evidence="3">Telomere</location>
    </subcellularLocation>
    <text evidence="3">Associated with the Golgi and with juxtanuclear SLC2A4/GLUT4-vesicles (By similarity). Also found around the pericentriolar matrix of mitotic centromeres (By similarity). During interphase, a small fraction of TNKS2 is found in the nucleus, associated with TRF1 (By similarity).</text>
</comment>
<comment type="PTM">
    <text evidence="2 3">Ubiquitinated by RNF146 when auto-poly-ADP-ribosylated, leading to its degradation. Deubiquitinated by USP25; leading to stabilization (By similarity).</text>
</comment>
<comment type="PTM">
    <text evidence="3">ADP-ribosylated (-auto). Poly-ADP-ribosylated protein is recognized by RNF146, followed by ubiquitination.</text>
</comment>
<comment type="similarity">
    <text evidence="6">Belongs to the ARTD/PARP family.</text>
</comment>
<protein>
    <recommendedName>
        <fullName evidence="6">Poly [ADP-ribose] polymerase tankyrase-2</fullName>
        <ecNumber evidence="3">2.4.2.30</ecNumber>
    </recommendedName>
    <alternativeName>
        <fullName>ADP-ribosyltransferase diphtheria toxin-like 6</fullName>
        <shortName>ARTD6</shortName>
    </alternativeName>
    <alternativeName>
        <fullName evidence="6">Protein poly-ADP-ribosyltransferase tankyrase-2</fullName>
        <ecNumber evidence="3">2.4.2.-</ecNumber>
    </alternativeName>
    <alternativeName>
        <fullName>TNKS-2</fullName>
    </alternativeName>
    <alternativeName>
        <fullName>TRF1-interacting ankyrin-related ADP-ribose polymerase 2</fullName>
    </alternativeName>
    <alternativeName>
        <fullName>Tankyrase II</fullName>
    </alternativeName>
    <alternativeName>
        <fullName>Tankyrase-2</fullName>
        <shortName>TANK2</shortName>
    </alternativeName>
</protein>
<accession>Q3UES3</accession>
<accession>Q6P537</accession>
<accession>Q8BXH7</accession>
<organism>
    <name type="scientific">Mus musculus</name>
    <name type="common">Mouse</name>
    <dbReference type="NCBI Taxonomy" id="10090"/>
    <lineage>
        <taxon>Eukaryota</taxon>
        <taxon>Metazoa</taxon>
        <taxon>Chordata</taxon>
        <taxon>Craniata</taxon>
        <taxon>Vertebrata</taxon>
        <taxon>Euteleostomi</taxon>
        <taxon>Mammalia</taxon>
        <taxon>Eutheria</taxon>
        <taxon>Euarchontoglires</taxon>
        <taxon>Glires</taxon>
        <taxon>Rodentia</taxon>
        <taxon>Myomorpha</taxon>
        <taxon>Muroidea</taxon>
        <taxon>Muridae</taxon>
        <taxon>Murinae</taxon>
        <taxon>Mus</taxon>
        <taxon>Mus</taxon>
    </lineage>
</organism>
<feature type="chain" id="PRO_0000409512" description="Poly [ADP-ribose] polymerase tankyrase-2">
    <location>
        <begin position="1"/>
        <end position="1166"/>
    </location>
</feature>
<feature type="repeat" description="ANK 1">
    <location>
        <begin position="23"/>
        <end position="52"/>
    </location>
</feature>
<feature type="repeat" description="ANK 2">
    <location>
        <begin position="57"/>
        <end position="86"/>
    </location>
</feature>
<feature type="repeat" description="ANK 3">
    <location>
        <begin position="90"/>
        <end position="119"/>
    </location>
</feature>
<feature type="repeat" description="ANK 4">
    <location>
        <begin position="123"/>
        <end position="152"/>
    </location>
</feature>
<feature type="repeat" description="ANK 5">
    <location>
        <begin position="210"/>
        <end position="239"/>
    </location>
</feature>
<feature type="repeat" description="ANK 6">
    <location>
        <begin position="243"/>
        <end position="272"/>
    </location>
</feature>
<feature type="repeat" description="ANK 7">
    <location>
        <begin position="276"/>
        <end position="305"/>
    </location>
</feature>
<feature type="repeat" description="ANK 8">
    <location>
        <begin position="363"/>
        <end position="395"/>
    </location>
</feature>
<feature type="repeat" description="ANK 9">
    <location>
        <begin position="399"/>
        <end position="428"/>
    </location>
</feature>
<feature type="repeat" description="ANK 10">
    <location>
        <begin position="432"/>
        <end position="461"/>
    </location>
</feature>
<feature type="repeat" description="ANK 11">
    <location>
        <begin position="463"/>
        <end position="489"/>
    </location>
</feature>
<feature type="repeat" description="ANK 12">
    <location>
        <begin position="525"/>
        <end position="554"/>
    </location>
</feature>
<feature type="repeat" description="ANK 13">
    <location>
        <begin position="558"/>
        <end position="587"/>
    </location>
</feature>
<feature type="repeat" description="ANK 14">
    <location>
        <begin position="591"/>
        <end position="620"/>
    </location>
</feature>
<feature type="repeat" description="ANK 15">
    <location>
        <begin position="624"/>
        <end position="652"/>
    </location>
</feature>
<feature type="repeat" description="ANK 16">
    <location>
        <begin position="678"/>
        <end position="707"/>
    </location>
</feature>
<feature type="repeat" description="ANK 17">
    <location>
        <begin position="711"/>
        <end position="740"/>
    </location>
</feature>
<feature type="repeat" description="ANK 18">
    <location>
        <begin position="744"/>
        <end position="773"/>
    </location>
</feature>
<feature type="domain" description="SAM" evidence="4">
    <location>
        <begin position="873"/>
        <end position="936"/>
    </location>
</feature>
<feature type="domain" description="PARP catalytic" evidence="5">
    <location>
        <begin position="959"/>
        <end position="1164"/>
    </location>
</feature>
<feature type="region of interest" description="HIF1AN-binding" evidence="3">
    <location>
        <begin position="545"/>
        <end position="553"/>
    </location>
</feature>
<feature type="binding site" evidence="2">
    <location>
        <position position="1081"/>
    </location>
    <ligand>
        <name>Zn(2+)</name>
        <dbReference type="ChEBI" id="CHEBI:29105"/>
    </ligand>
</feature>
<feature type="binding site" evidence="2">
    <location>
        <position position="1084"/>
    </location>
    <ligand>
        <name>Zn(2+)</name>
        <dbReference type="ChEBI" id="CHEBI:29105"/>
    </ligand>
</feature>
<feature type="binding site" evidence="2">
    <location>
        <position position="1089"/>
    </location>
    <ligand>
        <name>Zn(2+)</name>
        <dbReference type="ChEBI" id="CHEBI:29105"/>
    </ligand>
</feature>
<feature type="binding site" evidence="2">
    <location>
        <position position="1092"/>
    </location>
    <ligand>
        <name>Zn(2+)</name>
        <dbReference type="ChEBI" id="CHEBI:29105"/>
    </ligand>
</feature>
<feature type="modified residue" description="(3S)-3-hydroxyasparagine; by HIF1AN" evidence="1">
    <location>
        <position position="203"/>
    </location>
</feature>
<feature type="modified residue" description="(3S)-3-hydroxyhistidine; by HIF1AN" evidence="1">
    <location>
        <position position="238"/>
    </location>
</feature>
<feature type="modified residue" description="(3S)-3-hydroxyasparagine; by HIF1AN" evidence="1">
    <location>
        <position position="271"/>
    </location>
</feature>
<feature type="modified residue" description="(3S)-3-hydroxyasparagine; by HIF1AN" evidence="1">
    <location>
        <position position="427"/>
    </location>
</feature>
<feature type="modified residue" description="(3S)-3-hydroxyasparagine; by HIF1AN" evidence="1">
    <location>
        <position position="518"/>
    </location>
</feature>
<feature type="modified residue" description="(3S)-3-hydroxyhistidine; by HIF1AN" evidence="1">
    <location>
        <position position="553"/>
    </location>
</feature>
<feature type="modified residue" description="(3S)-3-hydroxyasparagine; by HIF1AN" evidence="1">
    <location>
        <position position="586"/>
    </location>
</feature>
<feature type="modified residue" description="(3S)-3-hydroxyasparagine; by HIF1AN" evidence="1">
    <location>
        <position position="671"/>
    </location>
</feature>
<feature type="modified residue" description="(3S)-3-hydroxyasparagine; by HIF1AN" evidence="1">
    <location>
        <position position="706"/>
    </location>
</feature>
<feature type="modified residue" description="(3S)-3-hydroxyasparagine; by HIF1AN" evidence="1">
    <location>
        <position position="739"/>
    </location>
</feature>
<feature type="sequence conflict" description="In Ref. 1; BAC32960." evidence="6" ref="1">
    <original>D</original>
    <variation>H</variation>
    <location>
        <position position="116"/>
    </location>
</feature>
<feature type="sequence conflict" description="In Ref. 1; BAC32960." evidence="6" ref="1">
    <original>K</original>
    <variation>E</variation>
    <location>
        <position position="178"/>
    </location>
</feature>
<feature type="sequence conflict" description="In Ref. 1; BAC32960." evidence="6" ref="1">
    <original>G</original>
    <variation>E</variation>
    <location>
        <position position="220"/>
    </location>
</feature>
<feature type="sequence conflict" description="In Ref. 1; BAE28838." evidence="6" ref="1">
    <original>P</original>
    <variation>T</variation>
    <location>
        <position position="809"/>
    </location>
</feature>
<sequence>MSGRRCAGGGAACASAGAEAVEPSARELFEACRNGDVERVKRLVTPEKVNSRDTAGRKSTPLHFAAGFGRKDVVEYLLQNGANVQARDDGGLIPLHNACSFGHAEVVNLLLQHGADPNARDNWNYTPLHEAAIKGKIDVCIVLLQHGAEPTIRNTDGRTALDLADPSAKAVLTGDYKKDELLESARSGNEEKMMALLTPLNVNCHASDGRKSTPLHLAAGYNRVKIVQLLLHHGADVHAKDKGDLVPLHNACSYGHYEVTELLVKHGACVNAMDLWQFTPLHEAASKNRIEVCSLLLSYGADPTLLNCHNKSAIDLAPTAQLKERLSYEFKGHSLLQAAREADVTRIKKHLSLEMVNFKHPQTHETALHCAAASPYPKRKQICELLLRKGANTNEKTKEFLTPLHVASENAHNDVVEVVVKHEAKVNALDSLGQTSLHRAAHCGHLQTCRLLLSYGCDPNIISLQGFTALQMGNENVQQLLQEGASLGHSEADRQLLEAAKAGDVETVKKLCTVQSVNCRDIEGRQSTPLHFAAGYNRVSVVEYLLQHGADVHAKDKGGLVPLHNACSYGHYEVAELLVKHGAVVNVADLWKFTPLHEAAAKGKYEICKLLLQHGADPTKKNRDGNTPLDLVKDGDTDIQDLLRGDAALLDAAKKGCLARVKKLSSPDNVNCRDTQGRHSTPLHLAAGYNNLEVAEYLLQHGADVNAQDKGGLIPLHNAASYGHVDVAALLIKYNACVNATDKWAFTPLHEAAQKGRTQLCALLLAHGADPTLKNQEGQTPLDLVSADDVSALLTAAMPPSALPTCYKPQVLSGVRGPGATADALSSGPSSPSSLSAASSLDNLSGSFSELSAVVSSSAAEGATGLQRKEDSGIDFSITQFIRNLGLEHLMDIFEREQITLDVLVEMGHKELKEIGINAYGHRHKLIKGVERLISGQQGLNPYLTLNNSGSGTILIDLSPDDKEFQSVEEEMQSTVREHRDGGHAGGVFNRYNILKIQKVCNKKLWERYTHRRKEVSEENHNHANERMLFHGSPFVNAIIHKGFDERHAYIGGMFGAGIYFAENSSKSNQYVYGIGGGTGCPIHKDRSCYICHRQLLFCRVTLGKSFLQFSAMKMAHSPPGHHSVTGRPSVNGLALAEYVIYRGEQAYPEYLITYQIVRPEGMVDG</sequence>
<reference key="1">
    <citation type="journal article" date="2005" name="Science">
        <title>The transcriptional landscape of the mammalian genome.</title>
        <authorList>
            <person name="Carninci P."/>
            <person name="Kasukawa T."/>
            <person name="Katayama S."/>
            <person name="Gough J."/>
            <person name="Frith M.C."/>
            <person name="Maeda N."/>
            <person name="Oyama R."/>
            <person name="Ravasi T."/>
            <person name="Lenhard B."/>
            <person name="Wells C."/>
            <person name="Kodzius R."/>
            <person name="Shimokawa K."/>
            <person name="Bajic V.B."/>
            <person name="Brenner S.E."/>
            <person name="Batalov S."/>
            <person name="Forrest A.R."/>
            <person name="Zavolan M."/>
            <person name="Davis M.J."/>
            <person name="Wilming L.G."/>
            <person name="Aidinis V."/>
            <person name="Allen J.E."/>
            <person name="Ambesi-Impiombato A."/>
            <person name="Apweiler R."/>
            <person name="Aturaliya R.N."/>
            <person name="Bailey T.L."/>
            <person name="Bansal M."/>
            <person name="Baxter L."/>
            <person name="Beisel K.W."/>
            <person name="Bersano T."/>
            <person name="Bono H."/>
            <person name="Chalk A.M."/>
            <person name="Chiu K.P."/>
            <person name="Choudhary V."/>
            <person name="Christoffels A."/>
            <person name="Clutterbuck D.R."/>
            <person name="Crowe M.L."/>
            <person name="Dalla E."/>
            <person name="Dalrymple B.P."/>
            <person name="de Bono B."/>
            <person name="Della Gatta G."/>
            <person name="di Bernardo D."/>
            <person name="Down T."/>
            <person name="Engstrom P."/>
            <person name="Fagiolini M."/>
            <person name="Faulkner G."/>
            <person name="Fletcher C.F."/>
            <person name="Fukushima T."/>
            <person name="Furuno M."/>
            <person name="Futaki S."/>
            <person name="Gariboldi M."/>
            <person name="Georgii-Hemming P."/>
            <person name="Gingeras T.R."/>
            <person name="Gojobori T."/>
            <person name="Green R.E."/>
            <person name="Gustincich S."/>
            <person name="Harbers M."/>
            <person name="Hayashi Y."/>
            <person name="Hensch T.K."/>
            <person name="Hirokawa N."/>
            <person name="Hill D."/>
            <person name="Huminiecki L."/>
            <person name="Iacono M."/>
            <person name="Ikeo K."/>
            <person name="Iwama A."/>
            <person name="Ishikawa T."/>
            <person name="Jakt M."/>
            <person name="Kanapin A."/>
            <person name="Katoh M."/>
            <person name="Kawasawa Y."/>
            <person name="Kelso J."/>
            <person name="Kitamura H."/>
            <person name="Kitano H."/>
            <person name="Kollias G."/>
            <person name="Krishnan S.P."/>
            <person name="Kruger A."/>
            <person name="Kummerfeld S.K."/>
            <person name="Kurochkin I.V."/>
            <person name="Lareau L.F."/>
            <person name="Lazarevic D."/>
            <person name="Lipovich L."/>
            <person name="Liu J."/>
            <person name="Liuni S."/>
            <person name="McWilliam S."/>
            <person name="Madan Babu M."/>
            <person name="Madera M."/>
            <person name="Marchionni L."/>
            <person name="Matsuda H."/>
            <person name="Matsuzawa S."/>
            <person name="Miki H."/>
            <person name="Mignone F."/>
            <person name="Miyake S."/>
            <person name="Morris K."/>
            <person name="Mottagui-Tabar S."/>
            <person name="Mulder N."/>
            <person name="Nakano N."/>
            <person name="Nakauchi H."/>
            <person name="Ng P."/>
            <person name="Nilsson R."/>
            <person name="Nishiguchi S."/>
            <person name="Nishikawa S."/>
            <person name="Nori F."/>
            <person name="Ohara O."/>
            <person name="Okazaki Y."/>
            <person name="Orlando V."/>
            <person name="Pang K.C."/>
            <person name="Pavan W.J."/>
            <person name="Pavesi G."/>
            <person name="Pesole G."/>
            <person name="Petrovsky N."/>
            <person name="Piazza S."/>
            <person name="Reed J."/>
            <person name="Reid J.F."/>
            <person name="Ring B.Z."/>
            <person name="Ringwald M."/>
            <person name="Rost B."/>
            <person name="Ruan Y."/>
            <person name="Salzberg S.L."/>
            <person name="Sandelin A."/>
            <person name="Schneider C."/>
            <person name="Schoenbach C."/>
            <person name="Sekiguchi K."/>
            <person name="Semple C.A."/>
            <person name="Seno S."/>
            <person name="Sessa L."/>
            <person name="Sheng Y."/>
            <person name="Shibata Y."/>
            <person name="Shimada H."/>
            <person name="Shimada K."/>
            <person name="Silva D."/>
            <person name="Sinclair B."/>
            <person name="Sperling S."/>
            <person name="Stupka E."/>
            <person name="Sugiura K."/>
            <person name="Sultana R."/>
            <person name="Takenaka Y."/>
            <person name="Taki K."/>
            <person name="Tammoja K."/>
            <person name="Tan S.L."/>
            <person name="Tang S."/>
            <person name="Taylor M.S."/>
            <person name="Tegner J."/>
            <person name="Teichmann S.A."/>
            <person name="Ueda H.R."/>
            <person name="van Nimwegen E."/>
            <person name="Verardo R."/>
            <person name="Wei C.L."/>
            <person name="Yagi K."/>
            <person name="Yamanishi H."/>
            <person name="Zabarovsky E."/>
            <person name="Zhu S."/>
            <person name="Zimmer A."/>
            <person name="Hide W."/>
            <person name="Bult C."/>
            <person name="Grimmond S.M."/>
            <person name="Teasdale R.D."/>
            <person name="Liu E.T."/>
            <person name="Brusic V."/>
            <person name="Quackenbush J."/>
            <person name="Wahlestedt C."/>
            <person name="Mattick J.S."/>
            <person name="Hume D.A."/>
            <person name="Kai C."/>
            <person name="Sasaki D."/>
            <person name="Tomaru Y."/>
            <person name="Fukuda S."/>
            <person name="Kanamori-Katayama M."/>
            <person name="Suzuki M."/>
            <person name="Aoki J."/>
            <person name="Arakawa T."/>
            <person name="Iida J."/>
            <person name="Imamura K."/>
            <person name="Itoh M."/>
            <person name="Kato T."/>
            <person name="Kawaji H."/>
            <person name="Kawagashira N."/>
            <person name="Kawashima T."/>
            <person name="Kojima M."/>
            <person name="Kondo S."/>
            <person name="Konno H."/>
            <person name="Nakano K."/>
            <person name="Ninomiya N."/>
            <person name="Nishio T."/>
            <person name="Okada M."/>
            <person name="Plessy C."/>
            <person name="Shibata K."/>
            <person name="Shiraki T."/>
            <person name="Suzuki S."/>
            <person name="Tagami M."/>
            <person name="Waki K."/>
            <person name="Watahiki A."/>
            <person name="Okamura-Oho Y."/>
            <person name="Suzuki H."/>
            <person name="Kawai J."/>
            <person name="Hayashizaki Y."/>
        </authorList>
    </citation>
    <scope>NUCLEOTIDE SEQUENCE [LARGE SCALE MRNA]</scope>
    <source>
        <strain>C57BL/6J</strain>
        <tissue>Cerebellum</tissue>
        <tissue>Liver</tissue>
    </source>
</reference>
<reference key="2">
    <citation type="journal article" date="2009" name="PLoS Biol.">
        <title>Lineage-specific biology revealed by a finished genome assembly of the mouse.</title>
        <authorList>
            <person name="Church D.M."/>
            <person name="Goodstadt L."/>
            <person name="Hillier L.W."/>
            <person name="Zody M.C."/>
            <person name="Goldstein S."/>
            <person name="She X."/>
            <person name="Bult C.J."/>
            <person name="Agarwala R."/>
            <person name="Cherry J.L."/>
            <person name="DiCuccio M."/>
            <person name="Hlavina W."/>
            <person name="Kapustin Y."/>
            <person name="Meric P."/>
            <person name="Maglott D."/>
            <person name="Birtle Z."/>
            <person name="Marques A.C."/>
            <person name="Graves T."/>
            <person name="Zhou S."/>
            <person name="Teague B."/>
            <person name="Potamousis K."/>
            <person name="Churas C."/>
            <person name="Place M."/>
            <person name="Herschleb J."/>
            <person name="Runnheim R."/>
            <person name="Forrest D."/>
            <person name="Amos-Landgraf J."/>
            <person name="Schwartz D.C."/>
            <person name="Cheng Z."/>
            <person name="Lindblad-Toh K."/>
            <person name="Eichler E.E."/>
            <person name="Ponting C.P."/>
        </authorList>
    </citation>
    <scope>NUCLEOTIDE SEQUENCE [LARGE SCALE GENOMIC DNA]</scope>
    <source>
        <strain>C57BL/6J</strain>
    </source>
</reference>
<reference key="3">
    <citation type="journal article" date="2004" name="Genome Res.">
        <title>The status, quality, and expansion of the NIH full-length cDNA project: the Mammalian Gene Collection (MGC).</title>
        <authorList>
            <consortium name="The MGC Project Team"/>
        </authorList>
    </citation>
    <scope>NUCLEOTIDE SEQUENCE [LARGE SCALE MRNA] OF 759-1166</scope>
    <source>
        <tissue>Embryo</tissue>
    </source>
</reference>
<proteinExistence type="evidence at transcript level"/>